<sequence length="94" mass="10905">MRKYETVFILNPALDEEGYKANVEKFKGVIENAGGTVDNVDLWGKRKLAYEVKKVSEGYYTLMNFTADTELPKELDRVFRITDTVIRHMIITQE</sequence>
<keyword id="KW-0687">Ribonucleoprotein</keyword>
<keyword id="KW-0689">Ribosomal protein</keyword>
<keyword id="KW-0694">RNA-binding</keyword>
<keyword id="KW-0699">rRNA-binding</keyword>
<reference key="1">
    <citation type="submission" date="2008-10" db="EMBL/GenBank/DDBJ databases">
        <title>Genome sequence of Clostridium botulinum A2 Kyoto.</title>
        <authorList>
            <person name="Shrivastava S."/>
            <person name="Brinkac L.M."/>
            <person name="Brown J.L."/>
            <person name="Bruce D."/>
            <person name="Detter C.C."/>
            <person name="Johnson E.A."/>
            <person name="Munk C.A."/>
            <person name="Smith L.A."/>
            <person name="Smith T.J."/>
            <person name="Sutton G."/>
            <person name="Brettin T.S."/>
        </authorList>
    </citation>
    <scope>NUCLEOTIDE SEQUENCE [LARGE SCALE GENOMIC DNA]</scope>
    <source>
        <strain>Kyoto / Type A2</strain>
    </source>
</reference>
<gene>
    <name evidence="1" type="primary">rpsF</name>
    <name type="ordered locus">CLM_4133</name>
</gene>
<evidence type="ECO:0000255" key="1">
    <source>
        <dbReference type="HAMAP-Rule" id="MF_00360"/>
    </source>
</evidence>
<evidence type="ECO:0000305" key="2"/>
<organism>
    <name type="scientific">Clostridium botulinum (strain Kyoto / Type A2)</name>
    <dbReference type="NCBI Taxonomy" id="536232"/>
    <lineage>
        <taxon>Bacteria</taxon>
        <taxon>Bacillati</taxon>
        <taxon>Bacillota</taxon>
        <taxon>Clostridia</taxon>
        <taxon>Eubacteriales</taxon>
        <taxon>Clostridiaceae</taxon>
        <taxon>Clostridium</taxon>
    </lineage>
</organism>
<accession>C1FP16</accession>
<feature type="chain" id="PRO_1000133519" description="Small ribosomal subunit protein bS6">
    <location>
        <begin position="1"/>
        <end position="94"/>
    </location>
</feature>
<dbReference type="EMBL" id="CP001581">
    <property type="protein sequence ID" value="ACO85812.1"/>
    <property type="molecule type" value="Genomic_DNA"/>
</dbReference>
<dbReference type="RefSeq" id="WP_003359427.1">
    <property type="nucleotide sequence ID" value="NC_012563.1"/>
</dbReference>
<dbReference type="SMR" id="C1FP16"/>
<dbReference type="KEGG" id="cby:CLM_4133"/>
<dbReference type="eggNOG" id="COG0360">
    <property type="taxonomic scope" value="Bacteria"/>
</dbReference>
<dbReference type="HOGENOM" id="CLU_113441_5_1_9"/>
<dbReference type="Proteomes" id="UP000001374">
    <property type="component" value="Chromosome"/>
</dbReference>
<dbReference type="GO" id="GO:0005737">
    <property type="term" value="C:cytoplasm"/>
    <property type="evidence" value="ECO:0007669"/>
    <property type="project" value="UniProtKB-ARBA"/>
</dbReference>
<dbReference type="GO" id="GO:1990904">
    <property type="term" value="C:ribonucleoprotein complex"/>
    <property type="evidence" value="ECO:0007669"/>
    <property type="project" value="UniProtKB-KW"/>
</dbReference>
<dbReference type="GO" id="GO:0005840">
    <property type="term" value="C:ribosome"/>
    <property type="evidence" value="ECO:0007669"/>
    <property type="project" value="UniProtKB-KW"/>
</dbReference>
<dbReference type="GO" id="GO:0070181">
    <property type="term" value="F:small ribosomal subunit rRNA binding"/>
    <property type="evidence" value="ECO:0007669"/>
    <property type="project" value="TreeGrafter"/>
</dbReference>
<dbReference type="GO" id="GO:0003735">
    <property type="term" value="F:structural constituent of ribosome"/>
    <property type="evidence" value="ECO:0007669"/>
    <property type="project" value="InterPro"/>
</dbReference>
<dbReference type="GO" id="GO:0006412">
    <property type="term" value="P:translation"/>
    <property type="evidence" value="ECO:0007669"/>
    <property type="project" value="UniProtKB-UniRule"/>
</dbReference>
<dbReference type="CDD" id="cd00473">
    <property type="entry name" value="bS6"/>
    <property type="match status" value="1"/>
</dbReference>
<dbReference type="FunFam" id="3.30.70.60:FF:000002">
    <property type="entry name" value="30S ribosomal protein S6"/>
    <property type="match status" value="1"/>
</dbReference>
<dbReference type="Gene3D" id="3.30.70.60">
    <property type="match status" value="1"/>
</dbReference>
<dbReference type="HAMAP" id="MF_00360">
    <property type="entry name" value="Ribosomal_bS6"/>
    <property type="match status" value="1"/>
</dbReference>
<dbReference type="InterPro" id="IPR000529">
    <property type="entry name" value="Ribosomal_bS6"/>
</dbReference>
<dbReference type="InterPro" id="IPR035980">
    <property type="entry name" value="Ribosomal_bS6_sf"/>
</dbReference>
<dbReference type="InterPro" id="IPR020814">
    <property type="entry name" value="Ribosomal_S6_plastid/chlpt"/>
</dbReference>
<dbReference type="InterPro" id="IPR014717">
    <property type="entry name" value="Transl_elong_EF1B/ribsomal_bS6"/>
</dbReference>
<dbReference type="NCBIfam" id="TIGR00166">
    <property type="entry name" value="S6"/>
    <property type="match status" value="1"/>
</dbReference>
<dbReference type="PANTHER" id="PTHR21011">
    <property type="entry name" value="MITOCHONDRIAL 28S RIBOSOMAL PROTEIN S6"/>
    <property type="match status" value="1"/>
</dbReference>
<dbReference type="PANTHER" id="PTHR21011:SF1">
    <property type="entry name" value="SMALL RIBOSOMAL SUBUNIT PROTEIN BS6M"/>
    <property type="match status" value="1"/>
</dbReference>
<dbReference type="Pfam" id="PF01250">
    <property type="entry name" value="Ribosomal_S6"/>
    <property type="match status" value="1"/>
</dbReference>
<dbReference type="SUPFAM" id="SSF54995">
    <property type="entry name" value="Ribosomal protein S6"/>
    <property type="match status" value="1"/>
</dbReference>
<proteinExistence type="inferred from homology"/>
<protein>
    <recommendedName>
        <fullName evidence="1">Small ribosomal subunit protein bS6</fullName>
    </recommendedName>
    <alternativeName>
        <fullName evidence="2">30S ribosomal protein S6</fullName>
    </alternativeName>
</protein>
<comment type="function">
    <text evidence="1">Binds together with bS18 to 16S ribosomal RNA.</text>
</comment>
<comment type="similarity">
    <text evidence="1">Belongs to the bacterial ribosomal protein bS6 family.</text>
</comment>
<name>RS6_CLOBJ</name>